<accession>P22751</accession>
<name>PLYX_DICCH</name>
<sequence>MKYAASGLLSVALNSLLLLGSNQRFATQDVAPVWRGIAFGQSTDVNFATNVLPEKVGVNDVTINGKKLTVNDKADLSAPITIESRGGKIANTHDGLTFFYTQLPANVNFTLQSDVTVEQFGPESDAKPNAQEGAGLLVRDILGVPRQEPLKEGYEEFPAASNMVMNAIMTQDKKSKTEVKMQLISRNGVTQPWGNTNAEITRTSYQEKINLEQTPTFRLKLERTNDGFITAYAPKGSDQWVSKTVKGADLVTHQDKDHYYVGFFASRNAKITISNASLTTSPANTKPSAPFKAETTAPLLQVASSSLSTSDTYPVQARVNYNGTVEVFQNGKSLGKPQRVRAGDDFSLTTRLTQQKSDFKLVYIPSEGEDKTAKETSFSVEKITLADARNLYVSPEGKAGNDGSKNAPLDIKTAINALPGGGTLWLMDGDYSATVIPVSATQRKGMKTLMPVGKKAVFHGLQLNASYWKVKGIEITEKSFRIEGSHNQIERLLAHHCDNTGIQVSSSDNVGRPLWASHNLILNSESHSNQHPSKKDADGFAVKMRVGEGNVIRGAFSHDNVDDGFDLFNKIEDGPNGAVMIENSISLNNTSNGFKLGGEGQPVAHQVKNSIAIGNHMDGFSDNFNPGALQVSNNIALDNVRFNFIFRPSPYYGYEKQGIFKNNVSLRTQPGKYDDAVVGRLDASNYFIRIIERSTVRVRKSRRRITNPSRCQRSSAGMKKAACNWVIFCRRSNRHKTQRHRNRYPSTPA</sequence>
<dbReference type="EC" id="4.2.2.9" evidence="2"/>
<dbReference type="EMBL" id="M62739">
    <property type="protein sequence ID" value="AAA24850.1"/>
    <property type="molecule type" value="Genomic_DNA"/>
</dbReference>
<dbReference type="PIR" id="A37839">
    <property type="entry name" value="A37839"/>
</dbReference>
<dbReference type="SMR" id="P22751"/>
<dbReference type="CAZy" id="PL9">
    <property type="family name" value="Polysaccharide Lyase Family 9"/>
</dbReference>
<dbReference type="GO" id="GO:0005576">
    <property type="term" value="C:extracellular region"/>
    <property type="evidence" value="ECO:0007669"/>
    <property type="project" value="UniProtKB-SubCell"/>
</dbReference>
<dbReference type="GO" id="GO:0046872">
    <property type="term" value="F:metal ion binding"/>
    <property type="evidence" value="ECO:0007669"/>
    <property type="project" value="UniProtKB-KW"/>
</dbReference>
<dbReference type="GO" id="GO:0047489">
    <property type="term" value="F:pectate disaccharide-lyase activity"/>
    <property type="evidence" value="ECO:0007669"/>
    <property type="project" value="UniProtKB-EC"/>
</dbReference>
<dbReference type="Gene3D" id="2.160.20.10">
    <property type="entry name" value="Single-stranded right-handed beta-helix, Pectin lyase-like"/>
    <property type="match status" value="1"/>
</dbReference>
<dbReference type="InterPro" id="IPR012334">
    <property type="entry name" value="Pectin_lyas_fold"/>
</dbReference>
<dbReference type="InterPro" id="IPR011050">
    <property type="entry name" value="Pectin_lyase_fold/virulence"/>
</dbReference>
<dbReference type="InterPro" id="IPR052052">
    <property type="entry name" value="Polysaccharide_Lyase_9"/>
</dbReference>
<dbReference type="PANTHER" id="PTHR40088">
    <property type="entry name" value="PECTATE LYASE (EUROFUNG)"/>
    <property type="match status" value="1"/>
</dbReference>
<dbReference type="PANTHER" id="PTHR40088:SF1">
    <property type="entry name" value="PECTATE LYASE PEL9"/>
    <property type="match status" value="1"/>
</dbReference>
<dbReference type="SUPFAM" id="SSF51126">
    <property type="entry name" value="Pectin lyase-like"/>
    <property type="match status" value="1"/>
</dbReference>
<keyword id="KW-0106">Calcium</keyword>
<keyword id="KW-0903">Direct protein sequencing</keyword>
<keyword id="KW-0456">Lyase</keyword>
<keyword id="KW-0479">Metal-binding</keyword>
<keyword id="KW-0964">Secreted</keyword>
<keyword id="KW-0732">Signal</keyword>
<feature type="signal peptide" evidence="2">
    <location>
        <begin position="1"/>
        <end position="26"/>
    </location>
</feature>
<feature type="chain" id="PRO_0000024935" description="Pectate disaccharide-lyase">
    <location>
        <begin position="27"/>
        <end position="749"/>
    </location>
</feature>
<feature type="active site" description="Proton acceptor" evidence="1">
    <location>
        <position position="595"/>
    </location>
</feature>
<feature type="binding site" evidence="1">
    <location>
        <position position="538"/>
    </location>
    <ligand>
        <name>Ca(2+)</name>
        <dbReference type="ChEBI" id="CHEBI:29108"/>
    </ligand>
</feature>
<feature type="binding site" evidence="1">
    <location>
        <position position="562"/>
    </location>
    <ligand>
        <name>Ca(2+)</name>
        <dbReference type="ChEBI" id="CHEBI:29108"/>
    </ligand>
</feature>
<feature type="binding site" evidence="1">
    <location>
        <position position="563"/>
    </location>
    <ligand>
        <name>Ca(2+)</name>
        <dbReference type="ChEBI" id="CHEBI:29108"/>
    </ligand>
</feature>
<feature type="binding site" evidence="1">
    <location>
        <position position="566"/>
    </location>
    <ligand>
        <name>Ca(2+)</name>
        <dbReference type="ChEBI" id="CHEBI:29108"/>
    </ligand>
</feature>
<organism>
    <name type="scientific">Dickeya chrysanthemi</name>
    <name type="common">Pectobacterium chrysanthemi</name>
    <name type="synonym">Erwinia chrysanthemi</name>
    <dbReference type="NCBI Taxonomy" id="556"/>
    <lineage>
        <taxon>Bacteria</taxon>
        <taxon>Pseudomonadati</taxon>
        <taxon>Pseudomonadota</taxon>
        <taxon>Gammaproteobacteria</taxon>
        <taxon>Enterobacterales</taxon>
        <taxon>Pectobacteriaceae</taxon>
        <taxon>Dickeya</taxon>
    </lineage>
</organism>
<reference key="1">
    <citation type="journal article" date="1990" name="J. Bacteriol.">
        <title>Molecular cloning of the structural gene for exopolygalacturonate lyase from Erwinia chrysanthemi EC16 and characterization of the enzyme product.</title>
        <authorList>
            <person name="Brooks A.D."/>
            <person name="Yang He S."/>
            <person name="Gold S."/>
            <person name="Keen N.T."/>
            <person name="Collmer A."/>
            <person name="Hutcheson S.W."/>
        </authorList>
    </citation>
    <scope>NUCLEOTIDE SEQUENCE [GENOMIC DNA]</scope>
    <scope>PROTEIN SEQUENCE OF 27-46</scope>
    <scope>FUNCTION</scope>
    <scope>CATALYTIC ACTIVITY</scope>
    <scope>COFACTOR</scope>
    <scope>ACTIVITY REGULATION</scope>
    <scope>BIOPHYSICOCHEMICAL PROPERTIES</scope>
    <scope>DISRUPTION PHENOTYPE</scope>
    <source>
        <strain>EC16</strain>
    </source>
</reference>
<protein>
    <recommendedName>
        <fullName evidence="4">Pectate disaccharide-lyase</fullName>
        <ecNumber evidence="2">4.2.2.9</ecNumber>
    </recommendedName>
    <alternativeName>
        <fullName evidence="3">Exopolygalacturonate lyase</fullName>
        <shortName evidence="3">ExoPL</shortName>
    </alternativeName>
</protein>
<evidence type="ECO:0000250" key="1">
    <source>
        <dbReference type="UniProtKB" id="P0C1A7"/>
    </source>
</evidence>
<evidence type="ECO:0000269" key="2">
    <source>
    </source>
</evidence>
<evidence type="ECO:0000303" key="3">
    <source>
    </source>
</evidence>
<evidence type="ECO:0000305" key="4"/>
<evidence type="ECO:0000305" key="5">
    <source>
    </source>
</evidence>
<comment type="function">
    <text evidence="2">Exo-cleaving lyase that catalyzes the digestion of pectate. Contributes to pectate catabolism but not to bacterial virulence. In vitro can also use citrus pectin and highly methyl-esterified Link pectin as substrates.</text>
</comment>
<comment type="catalytic activity">
    <reaction evidence="2">
        <text>[(1-&gt;4)-alpha-D-galacturonosyl](n) = 4-(4-deoxy-alpha-D-galact-4-enuronosyl)-D-galacturonate + [(1-&gt;4)-alpha-D-galacturonosyl](n-2)</text>
        <dbReference type="Rhea" id="RHEA:57104"/>
        <dbReference type="Rhea" id="RHEA-COMP:14570"/>
        <dbReference type="Rhea" id="RHEA-COMP:14734"/>
        <dbReference type="ChEBI" id="CHEBI:60189"/>
        <dbReference type="ChEBI" id="CHEBI:140523"/>
        <dbReference type="EC" id="4.2.2.9"/>
    </reaction>
</comment>
<comment type="cofactor">
    <cofactor evidence="5">
        <name>Ca(2+)</name>
        <dbReference type="ChEBI" id="CHEBI:29108"/>
    </cofactor>
</comment>
<comment type="activity regulation">
    <text evidence="2">Activity on pectate is nearly completely inhibited by ethyleneglycol-bis-(P-aminoethyl ether) N,N'-tetraacetic acid (EGTA), EDTA or nitrilotriacetic acid. Activity is specifically restored by the addition of Ca(2+).</text>
</comment>
<comment type="biophysicochemical properties">
    <phDependence>
        <text evidence="2">Optimum pH is 7.5-8.0.</text>
    </phDependence>
</comment>
<comment type="subcellular location">
    <subcellularLocation>
        <location evidence="1">Secreted</location>
    </subcellularLocation>
</comment>
<comment type="disruption phenotype">
    <text evidence="2">Mutant exhibits reduced growth on pectate, but retains pathogenicity on chrysanthemum.</text>
</comment>
<comment type="similarity">
    <text evidence="4">Belongs to the polysaccharide lyase 9 family.</text>
</comment>
<gene>
    <name evidence="3" type="primary">pelX</name>
</gene>
<proteinExistence type="evidence at protein level"/>